<dbReference type="EC" id="2.7.11.1"/>
<dbReference type="EMBL" id="AB046597">
    <property type="protein sequence ID" value="BAB17033.1"/>
    <property type="molecule type" value="Genomic_DNA"/>
</dbReference>
<dbReference type="EMBL" id="BA000022">
    <property type="protein sequence ID" value="BAA17235.1"/>
    <property type="status" value="ALT_FRAME"/>
    <property type="molecule type" value="Genomic_DNA"/>
</dbReference>
<dbReference type="EMBL" id="BA000022">
    <property type="protein sequence ID" value="BAA17236.1"/>
    <property type="status" value="ALT_FRAME"/>
    <property type="molecule type" value="Genomic_DNA"/>
</dbReference>
<dbReference type="PIR" id="S75321">
    <property type="entry name" value="S75321"/>
</dbReference>
<dbReference type="PIR" id="S75322">
    <property type="entry name" value="S75322"/>
</dbReference>
<dbReference type="SMR" id="Q9FAB3"/>
<dbReference type="IntAct" id="Q9FAB3">
    <property type="interactions" value="3"/>
</dbReference>
<dbReference type="STRING" id="1148.gene:10498098"/>
<dbReference type="PaxDb" id="1148-1652312"/>
<dbReference type="EnsemblBacteria" id="BAA17235">
    <property type="protein sequence ID" value="BAA17235"/>
    <property type="gene ID" value="BAA17235"/>
</dbReference>
<dbReference type="EnsemblBacteria" id="BAA17236">
    <property type="protein sequence ID" value="BAA17236"/>
    <property type="gene ID" value="BAA17236"/>
</dbReference>
<dbReference type="KEGG" id="syn:sll1574"/>
<dbReference type="KEGG" id="syn:sll1575"/>
<dbReference type="eggNOG" id="COG0515">
    <property type="taxonomic scope" value="Bacteria"/>
</dbReference>
<dbReference type="InParanoid" id="Q9FAB3"/>
<dbReference type="PhylomeDB" id="Q9FAB3"/>
<dbReference type="Proteomes" id="UP000001425">
    <property type="component" value="Chromosome"/>
</dbReference>
<dbReference type="GO" id="GO:0005524">
    <property type="term" value="F:ATP binding"/>
    <property type="evidence" value="ECO:0007669"/>
    <property type="project" value="UniProtKB-KW"/>
</dbReference>
<dbReference type="GO" id="GO:0106310">
    <property type="term" value="F:protein serine kinase activity"/>
    <property type="evidence" value="ECO:0007669"/>
    <property type="project" value="RHEA"/>
</dbReference>
<dbReference type="GO" id="GO:0004674">
    <property type="term" value="F:protein serine/threonine kinase activity"/>
    <property type="evidence" value="ECO:0000318"/>
    <property type="project" value="GO_Central"/>
</dbReference>
<dbReference type="CDD" id="cd14014">
    <property type="entry name" value="STKc_PknB_like"/>
    <property type="match status" value="1"/>
</dbReference>
<dbReference type="Gene3D" id="3.30.200.20">
    <property type="entry name" value="Phosphorylase Kinase, domain 1"/>
    <property type="match status" value="1"/>
</dbReference>
<dbReference type="Gene3D" id="1.10.510.10">
    <property type="entry name" value="Transferase(Phosphotransferase) domain 1"/>
    <property type="match status" value="1"/>
</dbReference>
<dbReference type="InterPro" id="IPR011009">
    <property type="entry name" value="Kinase-like_dom_sf"/>
</dbReference>
<dbReference type="InterPro" id="IPR000719">
    <property type="entry name" value="Prot_kinase_dom"/>
</dbReference>
<dbReference type="InterPro" id="IPR017441">
    <property type="entry name" value="Protein_kinase_ATP_BS"/>
</dbReference>
<dbReference type="InterPro" id="IPR008271">
    <property type="entry name" value="Ser/Thr_kinase_AS"/>
</dbReference>
<dbReference type="PANTHER" id="PTHR43289">
    <property type="entry name" value="MITOGEN-ACTIVATED PROTEIN KINASE KINASE KINASE 20-RELATED"/>
    <property type="match status" value="1"/>
</dbReference>
<dbReference type="PANTHER" id="PTHR43289:SF34">
    <property type="entry name" value="SERINE_THREONINE-PROTEIN KINASE YBDM-RELATED"/>
    <property type="match status" value="1"/>
</dbReference>
<dbReference type="Pfam" id="PF00069">
    <property type="entry name" value="Pkinase"/>
    <property type="match status" value="1"/>
</dbReference>
<dbReference type="SMART" id="SM00220">
    <property type="entry name" value="S_TKc"/>
    <property type="match status" value="1"/>
</dbReference>
<dbReference type="SUPFAM" id="SSF56112">
    <property type="entry name" value="Protein kinase-like (PK-like)"/>
    <property type="match status" value="1"/>
</dbReference>
<dbReference type="PROSITE" id="PS00107">
    <property type="entry name" value="PROTEIN_KINASE_ATP"/>
    <property type="match status" value="1"/>
</dbReference>
<dbReference type="PROSITE" id="PS50011">
    <property type="entry name" value="PROTEIN_KINASE_DOM"/>
    <property type="match status" value="1"/>
</dbReference>
<dbReference type="PROSITE" id="PS00108">
    <property type="entry name" value="PROTEIN_KINASE_ST"/>
    <property type="match status" value="1"/>
</dbReference>
<protein>
    <recommendedName>
        <fullName>Serine/threonine-protein kinase A</fullName>
        <ecNumber>2.7.11.1</ecNumber>
    </recommendedName>
</protein>
<evidence type="ECO:0000255" key="1">
    <source>
        <dbReference type="PROSITE-ProRule" id="PRU00159"/>
    </source>
</evidence>
<evidence type="ECO:0000255" key="2">
    <source>
        <dbReference type="PROSITE-ProRule" id="PRU10027"/>
    </source>
</evidence>
<evidence type="ECO:0000305" key="3"/>
<name>SPKA_SYNY3</name>
<comment type="function">
    <text>Protein kinase that regulates cellular motility via phosphorylation of membrane proteins.</text>
</comment>
<comment type="catalytic activity">
    <reaction>
        <text>L-seryl-[protein] + ATP = O-phospho-L-seryl-[protein] + ADP + H(+)</text>
        <dbReference type="Rhea" id="RHEA:17989"/>
        <dbReference type="Rhea" id="RHEA-COMP:9863"/>
        <dbReference type="Rhea" id="RHEA-COMP:11604"/>
        <dbReference type="ChEBI" id="CHEBI:15378"/>
        <dbReference type="ChEBI" id="CHEBI:29999"/>
        <dbReference type="ChEBI" id="CHEBI:30616"/>
        <dbReference type="ChEBI" id="CHEBI:83421"/>
        <dbReference type="ChEBI" id="CHEBI:456216"/>
        <dbReference type="EC" id="2.7.11.1"/>
    </reaction>
</comment>
<comment type="catalytic activity">
    <reaction>
        <text>L-threonyl-[protein] + ATP = O-phospho-L-threonyl-[protein] + ADP + H(+)</text>
        <dbReference type="Rhea" id="RHEA:46608"/>
        <dbReference type="Rhea" id="RHEA-COMP:11060"/>
        <dbReference type="Rhea" id="RHEA-COMP:11605"/>
        <dbReference type="ChEBI" id="CHEBI:15378"/>
        <dbReference type="ChEBI" id="CHEBI:30013"/>
        <dbReference type="ChEBI" id="CHEBI:30616"/>
        <dbReference type="ChEBI" id="CHEBI:61977"/>
        <dbReference type="ChEBI" id="CHEBI:456216"/>
        <dbReference type="EC" id="2.7.11.1"/>
    </reaction>
</comment>
<comment type="PTM">
    <text>Autophosphorylated.</text>
</comment>
<comment type="similarity">
    <text evidence="1">Belongs to the protein kinase superfamily. Ser/Thr protein kinase family.</text>
</comment>
<comment type="sequence caution" evidence="3">
    <conflict type="frameshift">
        <sequence resource="EMBL-CDS" id="BAA17235"/>
    </conflict>
    <text>sll1574 and sll1575 have been merged into one gene.</text>
</comment>
<comment type="sequence caution" evidence="3">
    <conflict type="frameshift">
        <sequence resource="EMBL-CDS" id="BAA17236"/>
    </conflict>
    <text>sll1574 and sll1575 have been merged into one gene.</text>
</comment>
<accession>Q9FAB3</accession>
<accession>P73208</accession>
<accession>P73209</accession>
<feature type="chain" id="PRO_0000171239" description="Serine/threonine-protein kinase A">
    <location>
        <begin position="1"/>
        <end position="521"/>
    </location>
</feature>
<feature type="domain" description="Protein kinase" evidence="1">
    <location>
        <begin position="15"/>
        <end position="289"/>
    </location>
</feature>
<feature type="active site" description="Proton acceptor" evidence="1 2">
    <location>
        <position position="148"/>
    </location>
</feature>
<feature type="binding site" evidence="1">
    <location>
        <begin position="21"/>
        <end position="29"/>
    </location>
    <ligand>
        <name>ATP</name>
        <dbReference type="ChEBI" id="CHEBI:30616"/>
    </ligand>
</feature>
<feature type="binding site" evidence="1">
    <location>
        <position position="45"/>
    </location>
    <ligand>
        <name>ATP</name>
        <dbReference type="ChEBI" id="CHEBI:30616"/>
    </ligand>
</feature>
<gene>
    <name type="primary">spkA</name>
    <name type="ordered locus">sll1574/sll1575</name>
</gene>
<reference key="1">
    <citation type="journal article" date="2001" name="J. Bacteriol.">
        <title>A eukaryotic-type protein kinase, SpkA, is required for normal motility of the unicellular Cyanobacterium synechocystis sp. strain PCC 6803.</title>
        <authorList>
            <person name="Kamei A."/>
            <person name="Yuasa T."/>
            <person name="Orikawa K."/>
            <person name="Geng X.X."/>
            <person name="Ikeuchi M."/>
        </authorList>
    </citation>
    <scope>NUCLEOTIDE SEQUENCE [GENOMIC DNA]</scope>
    <scope>CHARACTERIZATION</scope>
</reference>
<reference key="2">
    <citation type="journal article" date="1996" name="DNA Res.">
        <title>Sequence analysis of the genome of the unicellular cyanobacterium Synechocystis sp. strain PCC6803. II. Sequence determination of the entire genome and assignment of potential protein-coding regions.</title>
        <authorList>
            <person name="Kaneko T."/>
            <person name="Sato S."/>
            <person name="Kotani H."/>
            <person name="Tanaka A."/>
            <person name="Asamizu E."/>
            <person name="Nakamura Y."/>
            <person name="Miyajima N."/>
            <person name="Hirosawa M."/>
            <person name="Sugiura M."/>
            <person name="Sasamoto S."/>
            <person name="Kimura T."/>
            <person name="Hosouchi T."/>
            <person name="Matsuno A."/>
            <person name="Muraki A."/>
            <person name="Nakazaki N."/>
            <person name="Naruo K."/>
            <person name="Okumura S."/>
            <person name="Shimpo S."/>
            <person name="Takeuchi C."/>
            <person name="Wada T."/>
            <person name="Watanabe A."/>
            <person name="Yamada M."/>
            <person name="Yasuda M."/>
            <person name="Tabata S."/>
        </authorList>
    </citation>
    <scope>NUCLEOTIDE SEQUENCE [LARGE SCALE GENOMIC DNA]</scope>
    <source>
        <strain>ATCC 27184 / PCC 6803 / Kazusa</strain>
    </source>
</reference>
<keyword id="KW-0067">ATP-binding</keyword>
<keyword id="KW-0418">Kinase</keyword>
<keyword id="KW-0547">Nucleotide-binding</keyword>
<keyword id="KW-0597">Phosphoprotein</keyword>
<keyword id="KW-1185">Reference proteome</keyword>
<keyword id="KW-0723">Serine/threonine-protein kinase</keyword>
<keyword id="KW-0808">Transferase</keyword>
<proteinExistence type="evidence at protein level"/>
<sequence length="521" mass="58875">MTPDSRHRRLLANRYQLVELVGSGAMGQVYRAEDKLLGGVTVAVKFLSQALLNPRMKERFEREATISALLGEKSIHIVRVRDYGLDEKEIPFYVMEYLQGENISDVIKYRPLKVERFLKIARQICFGLDCAHKGIIYQGEACPVVHRDIKPSNVLLVEDPALGELVKILDFGIAKLVQAAEESKTQAFMGTLAYCSPEQMEGKELDSRSDIYSLGVMMYEMLTGEMPLFPDNSSFGGWYEAHHHTKPHPFSARYKIPASLEALVMNCLAKSPKGRPQSVDVIIRAIDAIEAEIKAPPISDTEKTQIAPHLLNTDMEATVVAQRGPGIVPETRLPLVSELCKQLEWPSDKPKQKIVFPYVLNAAEGKLASLWVMLNQEDILTRMSSIRYNQFLLMTSPHPMVLWITVLYHREYGPRWLPCYLDLKTRSGQSFAQMLGESGTYWLLFFALENPTRCQHMLTATVAPNQCKLLKEWAQTSQSMPGGKPQVTKRLLKQELDRLKPKIEAKLSQVKPSFNKEVSGL</sequence>
<organism>
    <name type="scientific">Synechocystis sp. (strain ATCC 27184 / PCC 6803 / Kazusa)</name>
    <dbReference type="NCBI Taxonomy" id="1111708"/>
    <lineage>
        <taxon>Bacteria</taxon>
        <taxon>Bacillati</taxon>
        <taxon>Cyanobacteriota</taxon>
        <taxon>Cyanophyceae</taxon>
        <taxon>Synechococcales</taxon>
        <taxon>Merismopediaceae</taxon>
        <taxon>Synechocystis</taxon>
    </lineage>
</organism>